<proteinExistence type="inferred from homology"/>
<accession>Q8XUZ7</accession>
<dbReference type="EMBL" id="AL646052">
    <property type="protein sequence ID" value="CAD16744.1"/>
    <property type="molecule type" value="Genomic_DNA"/>
</dbReference>
<dbReference type="RefSeq" id="WP_011002930.1">
    <property type="nucleotide sequence ID" value="NC_003295.1"/>
</dbReference>
<dbReference type="SMR" id="Q8XUZ7"/>
<dbReference type="STRING" id="267608.RSc3035"/>
<dbReference type="EnsemblBacteria" id="CAD16744">
    <property type="protein sequence ID" value="CAD16744"/>
    <property type="gene ID" value="RSc3035"/>
</dbReference>
<dbReference type="KEGG" id="rso:RSc3035"/>
<dbReference type="eggNOG" id="COG0222">
    <property type="taxonomic scope" value="Bacteria"/>
</dbReference>
<dbReference type="HOGENOM" id="CLU_086499_3_2_4"/>
<dbReference type="Proteomes" id="UP000001436">
    <property type="component" value="Chromosome"/>
</dbReference>
<dbReference type="GO" id="GO:0022625">
    <property type="term" value="C:cytosolic large ribosomal subunit"/>
    <property type="evidence" value="ECO:0007669"/>
    <property type="project" value="TreeGrafter"/>
</dbReference>
<dbReference type="GO" id="GO:0003729">
    <property type="term" value="F:mRNA binding"/>
    <property type="evidence" value="ECO:0007669"/>
    <property type="project" value="TreeGrafter"/>
</dbReference>
<dbReference type="GO" id="GO:0003735">
    <property type="term" value="F:structural constituent of ribosome"/>
    <property type="evidence" value="ECO:0007669"/>
    <property type="project" value="InterPro"/>
</dbReference>
<dbReference type="GO" id="GO:0006412">
    <property type="term" value="P:translation"/>
    <property type="evidence" value="ECO:0007669"/>
    <property type="project" value="UniProtKB-UniRule"/>
</dbReference>
<dbReference type="CDD" id="cd00387">
    <property type="entry name" value="Ribosomal_L7_L12"/>
    <property type="match status" value="1"/>
</dbReference>
<dbReference type="FunFam" id="1.20.5.710:FF:000003">
    <property type="entry name" value="50S ribosomal protein L7/L12"/>
    <property type="match status" value="1"/>
</dbReference>
<dbReference type="FunFam" id="3.30.1390.10:FF:000001">
    <property type="entry name" value="50S ribosomal protein L7/L12"/>
    <property type="match status" value="1"/>
</dbReference>
<dbReference type="Gene3D" id="3.30.1390.10">
    <property type="match status" value="1"/>
</dbReference>
<dbReference type="Gene3D" id="1.20.5.710">
    <property type="entry name" value="Single helix bin"/>
    <property type="match status" value="1"/>
</dbReference>
<dbReference type="HAMAP" id="MF_00368">
    <property type="entry name" value="Ribosomal_bL12"/>
    <property type="match status" value="1"/>
</dbReference>
<dbReference type="InterPro" id="IPR000206">
    <property type="entry name" value="Ribosomal_bL12"/>
</dbReference>
<dbReference type="InterPro" id="IPR013823">
    <property type="entry name" value="Ribosomal_bL12_C"/>
</dbReference>
<dbReference type="InterPro" id="IPR014719">
    <property type="entry name" value="Ribosomal_bL12_C/ClpS-like"/>
</dbReference>
<dbReference type="InterPro" id="IPR008932">
    <property type="entry name" value="Ribosomal_bL12_oligo"/>
</dbReference>
<dbReference type="InterPro" id="IPR036235">
    <property type="entry name" value="Ribosomal_bL12_oligo_N_sf"/>
</dbReference>
<dbReference type="NCBIfam" id="TIGR00855">
    <property type="entry name" value="L12"/>
    <property type="match status" value="1"/>
</dbReference>
<dbReference type="PANTHER" id="PTHR45987">
    <property type="entry name" value="39S RIBOSOMAL PROTEIN L12"/>
    <property type="match status" value="1"/>
</dbReference>
<dbReference type="PANTHER" id="PTHR45987:SF4">
    <property type="entry name" value="LARGE RIBOSOMAL SUBUNIT PROTEIN BL12M"/>
    <property type="match status" value="1"/>
</dbReference>
<dbReference type="Pfam" id="PF00542">
    <property type="entry name" value="Ribosomal_L12"/>
    <property type="match status" value="1"/>
</dbReference>
<dbReference type="Pfam" id="PF16320">
    <property type="entry name" value="Ribosomal_L12_N"/>
    <property type="match status" value="1"/>
</dbReference>
<dbReference type="SUPFAM" id="SSF54736">
    <property type="entry name" value="ClpS-like"/>
    <property type="match status" value="1"/>
</dbReference>
<dbReference type="SUPFAM" id="SSF48300">
    <property type="entry name" value="Ribosomal protein L7/12, oligomerisation (N-terminal) domain"/>
    <property type="match status" value="1"/>
</dbReference>
<comment type="function">
    <text evidence="1">Forms part of the ribosomal stalk which helps the ribosome interact with GTP-bound translation factors. Is thus essential for accurate translation.</text>
</comment>
<comment type="subunit">
    <text evidence="1">Homodimer. Part of the ribosomal stalk of the 50S ribosomal subunit. Forms a multimeric L10(L12)X complex, where L10 forms an elongated spine to which 2 to 4 L12 dimers bind in a sequential fashion. Binds GTP-bound translation factors.</text>
</comment>
<comment type="similarity">
    <text evidence="1">Belongs to the bacterial ribosomal protein bL12 family.</text>
</comment>
<reference key="1">
    <citation type="journal article" date="2002" name="Nature">
        <title>Genome sequence of the plant pathogen Ralstonia solanacearum.</title>
        <authorList>
            <person name="Salanoubat M."/>
            <person name="Genin S."/>
            <person name="Artiguenave F."/>
            <person name="Gouzy J."/>
            <person name="Mangenot S."/>
            <person name="Arlat M."/>
            <person name="Billault A."/>
            <person name="Brottier P."/>
            <person name="Camus J.-C."/>
            <person name="Cattolico L."/>
            <person name="Chandler M."/>
            <person name="Choisne N."/>
            <person name="Claudel-Renard C."/>
            <person name="Cunnac S."/>
            <person name="Demange N."/>
            <person name="Gaspin C."/>
            <person name="Lavie M."/>
            <person name="Moisan A."/>
            <person name="Robert C."/>
            <person name="Saurin W."/>
            <person name="Schiex T."/>
            <person name="Siguier P."/>
            <person name="Thebault P."/>
            <person name="Whalen M."/>
            <person name="Wincker P."/>
            <person name="Levy M."/>
            <person name="Weissenbach J."/>
            <person name="Boucher C.A."/>
        </authorList>
    </citation>
    <scope>NUCLEOTIDE SEQUENCE [LARGE SCALE GENOMIC DNA]</scope>
    <source>
        <strain>ATCC BAA-1114 / GMI1000</strain>
    </source>
</reference>
<organism>
    <name type="scientific">Ralstonia nicotianae (strain ATCC BAA-1114 / GMI1000)</name>
    <name type="common">Ralstonia solanacearum</name>
    <dbReference type="NCBI Taxonomy" id="267608"/>
    <lineage>
        <taxon>Bacteria</taxon>
        <taxon>Pseudomonadati</taxon>
        <taxon>Pseudomonadota</taxon>
        <taxon>Betaproteobacteria</taxon>
        <taxon>Burkholderiales</taxon>
        <taxon>Burkholderiaceae</taxon>
        <taxon>Ralstonia</taxon>
        <taxon>Ralstonia solanacearum species complex</taxon>
    </lineage>
</organism>
<name>RL7_RALN1</name>
<sequence>MAITKDDILEAVSAMSVMELNDLVKAFEDKFGVSAAAVAVAGPAGGAAAPAAEEKTEFDVILKGAGANKVGVIKAVREITGLGLKEAKDLVDGAPKTVKEAMPKADADAAAKKLIEAGAEVEVK</sequence>
<feature type="chain" id="PRO_0000157565" description="Large ribosomal subunit protein bL12">
    <location>
        <begin position="1"/>
        <end position="124"/>
    </location>
</feature>
<protein>
    <recommendedName>
        <fullName evidence="1">Large ribosomal subunit protein bL12</fullName>
    </recommendedName>
    <alternativeName>
        <fullName evidence="2">50S ribosomal protein L7/L12</fullName>
    </alternativeName>
</protein>
<gene>
    <name evidence="1" type="primary">rplL</name>
    <name type="ordered locus">RSc3035</name>
    <name type="ORF">RS04722</name>
</gene>
<evidence type="ECO:0000255" key="1">
    <source>
        <dbReference type="HAMAP-Rule" id="MF_00368"/>
    </source>
</evidence>
<evidence type="ECO:0000305" key="2"/>
<keyword id="KW-1185">Reference proteome</keyword>
<keyword id="KW-0687">Ribonucleoprotein</keyword>
<keyword id="KW-0689">Ribosomal protein</keyword>